<proteinExistence type="inferred from homology"/>
<name>MRD1_CANAL</name>
<sequence>MSRLIVKGLPKYYTEEKLREFFSKQGDVTDVKLMKKRNGESRKFAFIGYKSADAAERAVKYFNKSFIDTARIEVEFAKTFSDPTVPLSFKEKRKREEQKLKDEQERLLEQELRAQAKKQKTKSTSEIDDEIASNPKLREYMEVMKPSHQVKSWANDTIADGSGGPSVQDLENALNGNNESPVDKSNIEVVNTVEDASDDEYNDFKELSNKHGENEDEEEEEEMMSLGDLPTNEENKDKNESGENLAANENISDLEWLKSRSTRIKENGEVPEIVPEVKEVNEVTEATQQSDNEPEMTPEEQIAHKIEETGRLFIRNISYEASEEDFRSLFSQYGALEEVHIAIDTRTGKSKGFLYVQFLKKEDATRAYRSLDKQIFQGRLLHILPADKKKDHRLDEFDLKNLPLKKQRELKKKAQAAKTQFSWNSLYMNSDAVLESVASKLGVTKSQLIDPENSSSAVKQALAEAHVIGDVRKYFEDRGVDLTSFDKKERDDKIILVKNFPFGTTIDEIGELFSAYGQLKRMLMPPAGTIAIIEFRDAPSARAAFSKLAYKRFKSSILYLEKGPKDLFTREPTTNEVATIPEQQQNEHAVEAKISANEILGESKEDDEIESVQGPTVAVFVKNLNFATTVQALSDLFKPLPGFVVATVKTKPDPKNSGKTLSMGFGFVEFRTKEQANVAISTLDGHVLDGHKLQLKLSHKQGTGTSASSIKKSGKSSKIIIKNLPFEATRKDLLELFGAFGQLKSVRVPKKFDQSARGFAFVEFNLMKEAETAMSQLEGVHLLGRRLVMQYAEQDAENAEVEIERMTKKVKKQVATQNLAAARLAGKGKIELEEKDEEDFD</sequence>
<organism>
    <name type="scientific">Candida albicans (strain SC5314 / ATCC MYA-2876)</name>
    <name type="common">Yeast</name>
    <dbReference type="NCBI Taxonomy" id="237561"/>
    <lineage>
        <taxon>Eukaryota</taxon>
        <taxon>Fungi</taxon>
        <taxon>Dikarya</taxon>
        <taxon>Ascomycota</taxon>
        <taxon>Saccharomycotina</taxon>
        <taxon>Pichiomycetes</taxon>
        <taxon>Debaryomycetaceae</taxon>
        <taxon>Candida/Lodderomyces clade</taxon>
        <taxon>Candida</taxon>
    </lineage>
</organism>
<reference key="1">
    <citation type="journal article" date="2004" name="Proc. Natl. Acad. Sci. U.S.A.">
        <title>The diploid genome sequence of Candida albicans.</title>
        <authorList>
            <person name="Jones T."/>
            <person name="Federspiel N.A."/>
            <person name="Chibana H."/>
            <person name="Dungan J."/>
            <person name="Kalman S."/>
            <person name="Magee B.B."/>
            <person name="Newport G."/>
            <person name="Thorstenson Y.R."/>
            <person name="Agabian N."/>
            <person name="Magee P.T."/>
            <person name="Davis R.W."/>
            <person name="Scherer S."/>
        </authorList>
    </citation>
    <scope>NUCLEOTIDE SEQUENCE [LARGE SCALE GENOMIC DNA]</scope>
    <source>
        <strain>SC5314 / ATCC MYA-2876</strain>
    </source>
</reference>
<reference key="2">
    <citation type="journal article" date="2007" name="Genome Biol.">
        <title>Assembly of the Candida albicans genome into sixteen supercontigs aligned on the eight chromosomes.</title>
        <authorList>
            <person name="van het Hoog M."/>
            <person name="Rast T.J."/>
            <person name="Martchenko M."/>
            <person name="Grindle S."/>
            <person name="Dignard D."/>
            <person name="Hogues H."/>
            <person name="Cuomo C."/>
            <person name="Berriman M."/>
            <person name="Scherer S."/>
            <person name="Magee B.B."/>
            <person name="Whiteway M."/>
            <person name="Chibana H."/>
            <person name="Nantel A."/>
            <person name="Magee P.T."/>
        </authorList>
    </citation>
    <scope>GENOME REANNOTATION</scope>
    <source>
        <strain>SC5314 / ATCC MYA-2876</strain>
    </source>
</reference>
<reference key="3">
    <citation type="journal article" date="2013" name="Genome Biol.">
        <title>Assembly of a phased diploid Candida albicans genome facilitates allele-specific measurements and provides a simple model for repeat and indel structure.</title>
        <authorList>
            <person name="Muzzey D."/>
            <person name="Schwartz K."/>
            <person name="Weissman J.S."/>
            <person name="Sherlock G."/>
        </authorList>
    </citation>
    <scope>NUCLEOTIDE SEQUENCE [LARGE SCALE GENOMIC DNA]</scope>
    <scope>GENOME REANNOTATION</scope>
    <source>
        <strain>SC5314 / ATCC MYA-2876</strain>
    </source>
</reference>
<keyword id="KW-0539">Nucleus</keyword>
<keyword id="KW-1185">Reference proteome</keyword>
<keyword id="KW-0677">Repeat</keyword>
<keyword id="KW-0687">Ribonucleoprotein</keyword>
<keyword id="KW-0694">RNA-binding</keyword>
<keyword id="KW-0698">rRNA processing</keyword>
<accession>Q5AJS6</accession>
<accession>A0A1D8PJC4</accession>
<accession>Q5AJE7</accession>
<gene>
    <name type="primary">MRD1</name>
    <name type="ordered locus">CAALFM_C302020WA</name>
    <name type="ORF">CaO19.1646</name>
    <name type="ORF">CaO19.9215</name>
</gene>
<feature type="chain" id="PRO_0000081638" description="Multiple RNA-binding domain-containing protein 1">
    <location>
        <begin position="1"/>
        <end position="841"/>
    </location>
</feature>
<feature type="domain" description="RRM 1" evidence="2">
    <location>
        <begin position="2"/>
        <end position="79"/>
    </location>
</feature>
<feature type="domain" description="RRM 2" evidence="2">
    <location>
        <begin position="310"/>
        <end position="388"/>
    </location>
</feature>
<feature type="domain" description="RRM 3" evidence="2">
    <location>
        <begin position="493"/>
        <end position="565"/>
    </location>
</feature>
<feature type="domain" description="RRM 4" evidence="2">
    <location>
        <begin position="617"/>
        <end position="700"/>
    </location>
</feature>
<feature type="domain" description="RRM 5" evidence="2">
    <location>
        <begin position="717"/>
        <end position="794"/>
    </location>
</feature>
<feature type="region of interest" description="Disordered" evidence="3">
    <location>
        <begin position="194"/>
        <end position="249"/>
    </location>
</feature>
<feature type="compositionally biased region" description="Basic and acidic residues" evidence="3">
    <location>
        <begin position="202"/>
        <end position="213"/>
    </location>
</feature>
<feature type="compositionally biased region" description="Acidic residues" evidence="3">
    <location>
        <begin position="214"/>
        <end position="223"/>
    </location>
</feature>
<dbReference type="EMBL" id="CP017625">
    <property type="protein sequence ID" value="AOW28240.1"/>
    <property type="molecule type" value="Genomic_DNA"/>
</dbReference>
<dbReference type="RefSeq" id="XP_721723.2">
    <property type="nucleotide sequence ID" value="XM_716630.2"/>
</dbReference>
<dbReference type="SMR" id="Q5AJS6"/>
<dbReference type="FunCoup" id="Q5AJS6">
    <property type="interactions" value="1225"/>
</dbReference>
<dbReference type="STRING" id="237561.Q5AJS6"/>
<dbReference type="EnsemblFungi" id="C3_02020W_A-T">
    <property type="protein sequence ID" value="C3_02020W_A-T-p1"/>
    <property type="gene ID" value="C3_02020W_A"/>
</dbReference>
<dbReference type="GeneID" id="3636592"/>
<dbReference type="KEGG" id="cal:CAALFM_C302020WA"/>
<dbReference type="CGD" id="CAL0000192627">
    <property type="gene designation" value="orf19.9215"/>
</dbReference>
<dbReference type="VEuPathDB" id="FungiDB:C3_02020W_A"/>
<dbReference type="eggNOG" id="KOG0110">
    <property type="taxonomic scope" value="Eukaryota"/>
</dbReference>
<dbReference type="HOGENOM" id="CLU_008479_0_0_1"/>
<dbReference type="InParanoid" id="Q5AJS6"/>
<dbReference type="OrthoDB" id="439639at2759"/>
<dbReference type="PRO" id="PR:Q5AJS6"/>
<dbReference type="Proteomes" id="UP000000559">
    <property type="component" value="Chromosome 3"/>
</dbReference>
<dbReference type="GO" id="GO:0030686">
    <property type="term" value="C:90S preribosome"/>
    <property type="evidence" value="ECO:0007669"/>
    <property type="project" value="EnsemblFungi"/>
</dbReference>
<dbReference type="GO" id="GO:0016607">
    <property type="term" value="C:nuclear speck"/>
    <property type="evidence" value="ECO:0000318"/>
    <property type="project" value="GO_Central"/>
</dbReference>
<dbReference type="GO" id="GO:0005730">
    <property type="term" value="C:nucleolus"/>
    <property type="evidence" value="ECO:0000318"/>
    <property type="project" value="GO_Central"/>
</dbReference>
<dbReference type="GO" id="GO:0032040">
    <property type="term" value="C:small-subunit processome"/>
    <property type="evidence" value="ECO:0007669"/>
    <property type="project" value="EnsemblFungi"/>
</dbReference>
<dbReference type="GO" id="GO:0003723">
    <property type="term" value="F:RNA binding"/>
    <property type="evidence" value="ECO:0000318"/>
    <property type="project" value="GO_Central"/>
</dbReference>
<dbReference type="GO" id="GO:0042134">
    <property type="term" value="F:rRNA primary transcript binding"/>
    <property type="evidence" value="ECO:0007669"/>
    <property type="project" value="EnsemblFungi"/>
</dbReference>
<dbReference type="GO" id="GO:0000480">
    <property type="term" value="P:endonucleolytic cleavage in 5'-ETS of tricistronic rRNA transcript (SSU-rRNA, 5.8S rRNA, LSU-rRNA)"/>
    <property type="evidence" value="ECO:0007669"/>
    <property type="project" value="EnsemblFungi"/>
</dbReference>
<dbReference type="GO" id="GO:0000447">
    <property type="term" value="P:endonucleolytic cleavage in ITS1 to separate SSU-rRNA from 5.8S rRNA and LSU-rRNA from tricistronic rRNA transcript (SSU-rRNA, 5.8S rRNA, LSU-rRNA)"/>
    <property type="evidence" value="ECO:0007669"/>
    <property type="project" value="EnsemblFungi"/>
</dbReference>
<dbReference type="GO" id="GO:0000472">
    <property type="term" value="P:endonucleolytic cleavage to generate mature 5'-end of SSU-rRNA from (SSU-rRNA, 5.8S rRNA, LSU-rRNA)"/>
    <property type="evidence" value="ECO:0007669"/>
    <property type="project" value="EnsemblFungi"/>
</dbReference>
<dbReference type="GO" id="GO:0034462">
    <property type="term" value="P:small-subunit processome assembly"/>
    <property type="evidence" value="ECO:0007669"/>
    <property type="project" value="EnsemblFungi"/>
</dbReference>
<dbReference type="CDD" id="cd12565">
    <property type="entry name" value="RRM1_MRD1"/>
    <property type="match status" value="1"/>
</dbReference>
<dbReference type="CDD" id="cd12568">
    <property type="entry name" value="RRM3_MRD1"/>
    <property type="match status" value="1"/>
</dbReference>
<dbReference type="FunFam" id="3.30.70.330:FF:000247">
    <property type="entry name" value="Multiple RNA-binding domain-containing protein 1"/>
    <property type="match status" value="1"/>
</dbReference>
<dbReference type="FunFam" id="3.30.70.330:FF:000459">
    <property type="entry name" value="Multiple RNA-binding domain-containing protein 1"/>
    <property type="match status" value="1"/>
</dbReference>
<dbReference type="FunFam" id="3.30.70.330:FF:001137">
    <property type="entry name" value="Multiple RNA-binding domain-containing protein 1"/>
    <property type="match status" value="1"/>
</dbReference>
<dbReference type="Gene3D" id="3.30.70.330">
    <property type="match status" value="5"/>
</dbReference>
<dbReference type="InterPro" id="IPR034482">
    <property type="entry name" value="Mrd1_RRM3"/>
</dbReference>
<dbReference type="InterPro" id="IPR012677">
    <property type="entry name" value="Nucleotide-bd_a/b_plait_sf"/>
</dbReference>
<dbReference type="InterPro" id="IPR035979">
    <property type="entry name" value="RBD_domain_sf"/>
</dbReference>
<dbReference type="InterPro" id="IPR000504">
    <property type="entry name" value="RRM_dom"/>
</dbReference>
<dbReference type="InterPro" id="IPR003954">
    <property type="entry name" value="RRM_dom_euk"/>
</dbReference>
<dbReference type="InterPro" id="IPR052462">
    <property type="entry name" value="SLIRP/GR-RBP-like"/>
</dbReference>
<dbReference type="PANTHER" id="PTHR48027">
    <property type="entry name" value="HETEROGENEOUS NUCLEAR RIBONUCLEOPROTEIN 87F-RELATED"/>
    <property type="match status" value="1"/>
</dbReference>
<dbReference type="Pfam" id="PF00076">
    <property type="entry name" value="RRM_1"/>
    <property type="match status" value="5"/>
</dbReference>
<dbReference type="SMART" id="SM00360">
    <property type="entry name" value="RRM"/>
    <property type="match status" value="5"/>
</dbReference>
<dbReference type="SMART" id="SM00361">
    <property type="entry name" value="RRM_1"/>
    <property type="match status" value="2"/>
</dbReference>
<dbReference type="SUPFAM" id="SSF54928">
    <property type="entry name" value="RNA-binding domain, RBD"/>
    <property type="match status" value="3"/>
</dbReference>
<dbReference type="PROSITE" id="PS50102">
    <property type="entry name" value="RRM"/>
    <property type="match status" value="5"/>
</dbReference>
<comment type="function">
    <text evidence="1">Involved in pre-rRNA processing.</text>
</comment>
<comment type="subcellular location">
    <subcellularLocation>
        <location evidence="1">Nucleus</location>
    </subcellularLocation>
</comment>
<comment type="similarity">
    <text evidence="4">Belongs to the RRM MRD1 family.</text>
</comment>
<evidence type="ECO:0000250" key="1"/>
<evidence type="ECO:0000255" key="2">
    <source>
        <dbReference type="PROSITE-ProRule" id="PRU00176"/>
    </source>
</evidence>
<evidence type="ECO:0000256" key="3">
    <source>
        <dbReference type="SAM" id="MobiDB-lite"/>
    </source>
</evidence>
<evidence type="ECO:0000305" key="4"/>
<protein>
    <recommendedName>
        <fullName>Multiple RNA-binding domain-containing protein 1</fullName>
    </recommendedName>
</protein>